<feature type="chain" id="PRO_1000188527" description="Ribosomal RNA large subunit methyltransferase F">
    <location>
        <begin position="1"/>
        <end position="336"/>
    </location>
</feature>
<feature type="region of interest" description="Disordered" evidence="2">
    <location>
        <begin position="1"/>
        <end position="24"/>
    </location>
</feature>
<reference key="1">
    <citation type="journal article" date="2009" name="Genome Res.">
        <title>Newly introduced genomic prophage islands are critical determinants of in vivo competitiveness in the Liverpool epidemic strain of Pseudomonas aeruginosa.</title>
        <authorList>
            <person name="Winstanley C."/>
            <person name="Langille M.G.I."/>
            <person name="Fothergill J.L."/>
            <person name="Kukavica-Ibrulj I."/>
            <person name="Paradis-Bleau C."/>
            <person name="Sanschagrin F."/>
            <person name="Thomson N.R."/>
            <person name="Winsor G.L."/>
            <person name="Quail M.A."/>
            <person name="Lennard N."/>
            <person name="Bignell A."/>
            <person name="Clarke L."/>
            <person name="Seeger K."/>
            <person name="Saunders D."/>
            <person name="Harris D."/>
            <person name="Parkhill J."/>
            <person name="Hancock R.E.W."/>
            <person name="Brinkman F.S.L."/>
            <person name="Levesque R.C."/>
        </authorList>
    </citation>
    <scope>NUCLEOTIDE SEQUENCE [LARGE SCALE GENOMIC DNA]</scope>
    <source>
        <strain>LESB58</strain>
    </source>
</reference>
<keyword id="KW-0963">Cytoplasm</keyword>
<keyword id="KW-0489">Methyltransferase</keyword>
<keyword id="KW-0698">rRNA processing</keyword>
<keyword id="KW-0949">S-adenosyl-L-methionine</keyword>
<keyword id="KW-0808">Transferase</keyword>
<organism>
    <name type="scientific">Pseudomonas aeruginosa (strain LESB58)</name>
    <dbReference type="NCBI Taxonomy" id="557722"/>
    <lineage>
        <taxon>Bacteria</taxon>
        <taxon>Pseudomonadati</taxon>
        <taxon>Pseudomonadota</taxon>
        <taxon>Gammaproteobacteria</taxon>
        <taxon>Pseudomonadales</taxon>
        <taxon>Pseudomonadaceae</taxon>
        <taxon>Pseudomonas</taxon>
    </lineage>
</organism>
<accession>B7UVS7</accession>
<name>RLMF_PSEA8</name>
<evidence type="ECO:0000255" key="1">
    <source>
        <dbReference type="HAMAP-Rule" id="MF_01848"/>
    </source>
</evidence>
<evidence type="ECO:0000256" key="2">
    <source>
        <dbReference type="SAM" id="MobiDB-lite"/>
    </source>
</evidence>
<comment type="function">
    <text evidence="1">Specifically methylates the adenine in position 1618 of 23S rRNA.</text>
</comment>
<comment type="catalytic activity">
    <reaction evidence="1">
        <text>adenosine(1618) in 23S rRNA + S-adenosyl-L-methionine = N(6)-methyladenosine(1618) in 23S rRNA + S-adenosyl-L-homocysteine + H(+)</text>
        <dbReference type="Rhea" id="RHEA:16497"/>
        <dbReference type="Rhea" id="RHEA-COMP:10229"/>
        <dbReference type="Rhea" id="RHEA-COMP:10231"/>
        <dbReference type="ChEBI" id="CHEBI:15378"/>
        <dbReference type="ChEBI" id="CHEBI:57856"/>
        <dbReference type="ChEBI" id="CHEBI:59789"/>
        <dbReference type="ChEBI" id="CHEBI:74411"/>
        <dbReference type="ChEBI" id="CHEBI:74449"/>
        <dbReference type="EC" id="2.1.1.181"/>
    </reaction>
</comment>
<comment type="subcellular location">
    <subcellularLocation>
        <location evidence="1">Cytoplasm</location>
    </subcellularLocation>
</comment>
<comment type="similarity">
    <text evidence="1">Belongs to the methyltransferase superfamily. METTL16/RlmF family.</text>
</comment>
<dbReference type="EC" id="2.1.1.181" evidence="1"/>
<dbReference type="EMBL" id="FM209186">
    <property type="protein sequence ID" value="CAW25861.1"/>
    <property type="molecule type" value="Genomic_DNA"/>
</dbReference>
<dbReference type="RefSeq" id="WP_003092887.1">
    <property type="nucleotide sequence ID" value="NC_011770.1"/>
</dbReference>
<dbReference type="SMR" id="B7UVS7"/>
<dbReference type="KEGG" id="pag:PLES_11341"/>
<dbReference type="HOGENOM" id="CLU_027534_3_0_6"/>
<dbReference type="GO" id="GO:0005737">
    <property type="term" value="C:cytoplasm"/>
    <property type="evidence" value="ECO:0007669"/>
    <property type="project" value="UniProtKB-SubCell"/>
</dbReference>
<dbReference type="GO" id="GO:0052907">
    <property type="term" value="F:23S rRNA (adenine(1618)-N(6))-methyltransferase activity"/>
    <property type="evidence" value="ECO:0007669"/>
    <property type="project" value="UniProtKB-EC"/>
</dbReference>
<dbReference type="GO" id="GO:0070475">
    <property type="term" value="P:rRNA base methylation"/>
    <property type="evidence" value="ECO:0007669"/>
    <property type="project" value="TreeGrafter"/>
</dbReference>
<dbReference type="CDD" id="cd02440">
    <property type="entry name" value="AdoMet_MTases"/>
    <property type="match status" value="1"/>
</dbReference>
<dbReference type="FunFam" id="3.40.50.150:FF:000045">
    <property type="entry name" value="Ribosomal RNA large subunit methyltransferase F"/>
    <property type="match status" value="1"/>
</dbReference>
<dbReference type="Gene3D" id="3.40.50.150">
    <property type="entry name" value="Vaccinia Virus protein VP39"/>
    <property type="match status" value="1"/>
</dbReference>
<dbReference type="HAMAP" id="MF_01848">
    <property type="entry name" value="23SrRNA_methyltr_F"/>
    <property type="match status" value="1"/>
</dbReference>
<dbReference type="InterPro" id="IPR010286">
    <property type="entry name" value="METTL16/RlmF"/>
</dbReference>
<dbReference type="InterPro" id="IPR016909">
    <property type="entry name" value="rRNA_lsu_MeTfrase_F"/>
</dbReference>
<dbReference type="InterPro" id="IPR029063">
    <property type="entry name" value="SAM-dependent_MTases_sf"/>
</dbReference>
<dbReference type="NCBIfam" id="NF008725">
    <property type="entry name" value="PRK11727.1"/>
    <property type="match status" value="1"/>
</dbReference>
<dbReference type="PANTHER" id="PTHR13393:SF0">
    <property type="entry name" value="RNA N6-ADENOSINE-METHYLTRANSFERASE METTL16"/>
    <property type="match status" value="1"/>
</dbReference>
<dbReference type="PANTHER" id="PTHR13393">
    <property type="entry name" value="SAM-DEPENDENT METHYLTRANSFERASE"/>
    <property type="match status" value="1"/>
</dbReference>
<dbReference type="Pfam" id="PF05971">
    <property type="entry name" value="Methyltransf_10"/>
    <property type="match status" value="1"/>
</dbReference>
<dbReference type="PIRSF" id="PIRSF029038">
    <property type="entry name" value="Mtase_YbiN_prd"/>
    <property type="match status" value="1"/>
</dbReference>
<dbReference type="SUPFAM" id="SSF53335">
    <property type="entry name" value="S-adenosyl-L-methionine-dependent methyltransferases"/>
    <property type="match status" value="1"/>
</dbReference>
<proteinExistence type="inferred from homology"/>
<gene>
    <name evidence="1" type="primary">rlmF</name>
    <name type="ordered locus">PLES_11341</name>
</gene>
<protein>
    <recommendedName>
        <fullName evidence="1">Ribosomal RNA large subunit methyltransferase F</fullName>
        <ecNumber evidence="1">2.1.1.181</ecNumber>
    </recommendedName>
    <alternativeName>
        <fullName evidence="1">23S rRNA mA1618 methyltransferase</fullName>
    </alternativeName>
    <alternativeName>
        <fullName evidence="1">rRNA adenine N-6-methyltransferase</fullName>
    </alternativeName>
</protein>
<sequence>MPRPTSPHPDAERKSASPLHPRNRHLGRYDFPRLIAGSPELERFVILNPYGRQSIDFADPAAVKAFNRALLQQFYDVREWDIPDGYLCPPIPGRADYLHYLADLLGASHDGLIPRGPGLRALDVGTGANCIYPLLGHHEYGWRFVGADIDPQSLASAAAILAANPRFAAAIELRRQPDRRQIFQGLIGVDERFDMTLCNPPFHASLDEATRGSRRKWKNLGKLDPTRTLPLLNFGGQGAELYCEGGEAAFLAGMAEESRAFATQVFWFTTLVSKASNLPNLQERLKTLGASDIRVVDMAQGQKQSRFVAWTYLDKKQRRAWRKERWTAALLEPLGE</sequence>